<protein>
    <recommendedName>
        <fullName>NADH-ubiquinone oxidoreductase chain 5</fullName>
        <ecNumber>7.1.1.2</ecNumber>
    </recommendedName>
    <alternativeName>
        <fullName>NADH dehydrogenase subunit 5</fullName>
    </alternativeName>
</protein>
<feature type="chain" id="PRO_0000118156" description="NADH-ubiquinone oxidoreductase chain 5">
    <location>
        <begin position="1"/>
        <end position="612"/>
    </location>
</feature>
<feature type="transmembrane region" description="Helical" evidence="2">
    <location>
        <begin position="4"/>
        <end position="24"/>
    </location>
</feature>
<feature type="transmembrane region" description="Helical" evidence="2">
    <location>
        <begin position="48"/>
        <end position="68"/>
    </location>
</feature>
<feature type="transmembrane region" description="Helical" evidence="2">
    <location>
        <begin position="92"/>
        <end position="112"/>
    </location>
</feature>
<feature type="transmembrane region" description="Helical" evidence="2">
    <location>
        <begin position="122"/>
        <end position="142"/>
    </location>
</feature>
<feature type="transmembrane region" description="Helical" evidence="2">
    <location>
        <begin position="145"/>
        <end position="165"/>
    </location>
</feature>
<feature type="transmembrane region" description="Helical" evidence="2">
    <location>
        <begin position="183"/>
        <end position="203"/>
    </location>
</feature>
<feature type="transmembrane region" description="Helical" evidence="2">
    <location>
        <begin position="215"/>
        <end position="235"/>
    </location>
</feature>
<feature type="transmembrane region" description="Helical" evidence="2">
    <location>
        <begin position="247"/>
        <end position="267"/>
    </location>
</feature>
<feature type="transmembrane region" description="Helical" evidence="2">
    <location>
        <begin position="279"/>
        <end position="299"/>
    </location>
</feature>
<feature type="transmembrane region" description="Helical" evidence="2">
    <location>
        <begin position="307"/>
        <end position="327"/>
    </location>
</feature>
<feature type="transmembrane region" description="Helical" evidence="2">
    <location>
        <begin position="330"/>
        <end position="350"/>
    </location>
</feature>
<feature type="transmembrane region" description="Helical" evidence="2">
    <location>
        <begin position="376"/>
        <end position="396"/>
    </location>
</feature>
<feature type="transmembrane region" description="Helical" evidence="2">
    <location>
        <begin position="410"/>
        <end position="430"/>
    </location>
</feature>
<feature type="transmembrane region" description="Helical" evidence="2">
    <location>
        <begin position="463"/>
        <end position="483"/>
    </location>
</feature>
<feature type="transmembrane region" description="Helical" evidence="2">
    <location>
        <begin position="494"/>
        <end position="514"/>
    </location>
</feature>
<feature type="transmembrane region" description="Helical" evidence="2">
    <location>
        <begin position="592"/>
        <end position="612"/>
    </location>
</feature>
<dbReference type="EC" id="7.1.1.2"/>
<dbReference type="EMBL" id="DQ019313">
    <property type="protein sequence ID" value="AAY26169.1"/>
    <property type="molecule type" value="Genomic_DNA"/>
</dbReference>
<dbReference type="SMR" id="Q4JQH7"/>
<dbReference type="FunCoup" id="Q4JQH7">
    <property type="interactions" value="14"/>
</dbReference>
<dbReference type="STRING" id="99883.ENSTNIP00000002665"/>
<dbReference type="Ensembl" id="ENSTNIT00000002002.1">
    <property type="protein sequence ID" value="ENSTNIP00000002665.1"/>
    <property type="gene ID" value="ENSTNIG00000001473.1"/>
</dbReference>
<dbReference type="GeneTree" id="ENSGT00730000111303"/>
<dbReference type="HOGENOM" id="CLU_007100_6_0_1"/>
<dbReference type="InParanoid" id="Q4JQH7"/>
<dbReference type="OMA" id="GVGIMSF"/>
<dbReference type="TreeFam" id="TF342974"/>
<dbReference type="Proteomes" id="UP000007303">
    <property type="component" value="Mitochondrion"/>
</dbReference>
<dbReference type="GO" id="GO:0005743">
    <property type="term" value="C:mitochondrial inner membrane"/>
    <property type="evidence" value="ECO:0007669"/>
    <property type="project" value="UniProtKB-SubCell"/>
</dbReference>
<dbReference type="GO" id="GO:0008137">
    <property type="term" value="F:NADH dehydrogenase (ubiquinone) activity"/>
    <property type="evidence" value="ECO:0007669"/>
    <property type="project" value="UniProtKB-EC"/>
</dbReference>
<dbReference type="GO" id="GO:0042773">
    <property type="term" value="P:ATP synthesis coupled electron transport"/>
    <property type="evidence" value="ECO:0007669"/>
    <property type="project" value="InterPro"/>
</dbReference>
<dbReference type="GO" id="GO:0015990">
    <property type="term" value="P:electron transport coupled proton transport"/>
    <property type="evidence" value="ECO:0007669"/>
    <property type="project" value="TreeGrafter"/>
</dbReference>
<dbReference type="InterPro" id="IPR010934">
    <property type="entry name" value="NADH_DH_su5_C"/>
</dbReference>
<dbReference type="InterPro" id="IPR018393">
    <property type="entry name" value="NADHpl_OxRdtase_5_subgr"/>
</dbReference>
<dbReference type="InterPro" id="IPR001750">
    <property type="entry name" value="ND/Mrp_TM"/>
</dbReference>
<dbReference type="InterPro" id="IPR003945">
    <property type="entry name" value="NU5C-like"/>
</dbReference>
<dbReference type="InterPro" id="IPR001516">
    <property type="entry name" value="Proton_antipo_N"/>
</dbReference>
<dbReference type="NCBIfam" id="TIGR01974">
    <property type="entry name" value="NDH_I_L"/>
    <property type="match status" value="1"/>
</dbReference>
<dbReference type="PANTHER" id="PTHR42829">
    <property type="entry name" value="NADH-UBIQUINONE OXIDOREDUCTASE CHAIN 5"/>
    <property type="match status" value="1"/>
</dbReference>
<dbReference type="PANTHER" id="PTHR42829:SF2">
    <property type="entry name" value="NADH-UBIQUINONE OXIDOREDUCTASE CHAIN 5"/>
    <property type="match status" value="1"/>
</dbReference>
<dbReference type="Pfam" id="PF06455">
    <property type="entry name" value="NADH5_C"/>
    <property type="match status" value="1"/>
</dbReference>
<dbReference type="Pfam" id="PF00361">
    <property type="entry name" value="Proton_antipo_M"/>
    <property type="match status" value="1"/>
</dbReference>
<dbReference type="Pfam" id="PF00662">
    <property type="entry name" value="Proton_antipo_N"/>
    <property type="match status" value="1"/>
</dbReference>
<dbReference type="PRINTS" id="PR01434">
    <property type="entry name" value="NADHDHGNASE5"/>
</dbReference>
<comment type="function">
    <text evidence="1">Core subunit of the mitochondrial membrane respiratory chain NADH dehydrogenase (Complex I) that is believed to belong to the minimal assembly required for catalysis. Complex I functions in the transfer of electrons from NADH to the respiratory chain. The immediate electron acceptor for the enzyme is believed to be ubiquinone (By similarity).</text>
</comment>
<comment type="catalytic activity">
    <reaction>
        <text>a ubiquinone + NADH + 5 H(+)(in) = a ubiquinol + NAD(+) + 4 H(+)(out)</text>
        <dbReference type="Rhea" id="RHEA:29091"/>
        <dbReference type="Rhea" id="RHEA-COMP:9565"/>
        <dbReference type="Rhea" id="RHEA-COMP:9566"/>
        <dbReference type="ChEBI" id="CHEBI:15378"/>
        <dbReference type="ChEBI" id="CHEBI:16389"/>
        <dbReference type="ChEBI" id="CHEBI:17976"/>
        <dbReference type="ChEBI" id="CHEBI:57540"/>
        <dbReference type="ChEBI" id="CHEBI:57945"/>
        <dbReference type="EC" id="7.1.1.2"/>
    </reaction>
</comment>
<comment type="subcellular location">
    <subcellularLocation>
        <location evidence="1">Mitochondrion inner membrane</location>
        <topology evidence="1">Multi-pass membrane protein</topology>
    </subcellularLocation>
</comment>
<comment type="similarity">
    <text evidence="3">Belongs to the complex I subunit 5 family.</text>
</comment>
<name>NU5M_TETNG</name>
<accession>Q4JQH7</accession>
<sequence>MHSTPLIMTSSLVIIFTLLIYPILTTLSPSPQNPDWGLKQVKQQYKLAFLVSLLPLFLFLNEGAEAVITNLSWMNTHTFDINISLKFDHYSIIFTPVALYVTWSILEFASWYMHADPFMNRFFKYLLTFLIAMIILVTANNMFQLFIGWEGVGIMSFLLIGWWYARADANTAALQAVLYNRVGDIGLVFSMAWMATHLNSWEIQQIFFSSKDMDLTLPLIALILAATGKSAQFGLHPWLPSAMEGPTPVSALLHSSTMVVAGIFLLIRTSPLMENNPTALTLCLCLGALTTLFTATCALTQNDIKKIVAFSTSSQLGLMMVTIGLNQPQLAFLHICTHAFFKAMLFLCSGSIIHSLNDEQDIRKMGGMHHLTPFTSSCLTIGSLALTGTPFLAGFFSKDAIIEALNTSYLNAWALSLTLLATSFTAIYSLRVVFFVSMGHPRFNTFSPINENNPAVINPIKRLAWGSILAGLLITANILPMKTPVMSMPPLLKLAALAVTLLGLLTALELASLTTKQIKTTPHLTPHHFSNMLGFFPSIIHRLSPKINLILGQTIATQIIDLTWLEKVGPKTISSINTPLISTISNIQQGSIKTYLVLFLTTLALSTLVLLT</sequence>
<keyword id="KW-0249">Electron transport</keyword>
<keyword id="KW-0472">Membrane</keyword>
<keyword id="KW-0496">Mitochondrion</keyword>
<keyword id="KW-0999">Mitochondrion inner membrane</keyword>
<keyword id="KW-0520">NAD</keyword>
<keyword id="KW-1185">Reference proteome</keyword>
<keyword id="KW-0679">Respiratory chain</keyword>
<keyword id="KW-1278">Translocase</keyword>
<keyword id="KW-0812">Transmembrane</keyword>
<keyword id="KW-1133">Transmembrane helix</keyword>
<keyword id="KW-0813">Transport</keyword>
<keyword id="KW-0830">Ubiquinone</keyword>
<evidence type="ECO:0000250" key="1"/>
<evidence type="ECO:0000255" key="2"/>
<evidence type="ECO:0000305" key="3"/>
<geneLocation type="mitochondrion"/>
<proteinExistence type="inferred from homology"/>
<reference key="1">
    <citation type="journal article" date="2006" name="DNA Seq.">
        <title>The complete nucleotide sequence of the mitochondrial genome of Tetraodon nigroviridis.</title>
        <authorList>
            <person name="Yue G.H."/>
            <person name="Lo L.C."/>
            <person name="Zhu Z.Y."/>
            <person name="Lin G."/>
            <person name="Feng F."/>
        </authorList>
    </citation>
    <scope>NUCLEOTIDE SEQUENCE [LARGE SCALE GENOMIC DNA]</scope>
</reference>
<organism>
    <name type="scientific">Tetraodon nigroviridis</name>
    <name type="common">Spotted green pufferfish</name>
    <name type="synonym">Chelonodon nigroviridis</name>
    <dbReference type="NCBI Taxonomy" id="99883"/>
    <lineage>
        <taxon>Eukaryota</taxon>
        <taxon>Metazoa</taxon>
        <taxon>Chordata</taxon>
        <taxon>Craniata</taxon>
        <taxon>Vertebrata</taxon>
        <taxon>Euteleostomi</taxon>
        <taxon>Actinopterygii</taxon>
        <taxon>Neopterygii</taxon>
        <taxon>Teleostei</taxon>
        <taxon>Neoteleostei</taxon>
        <taxon>Acanthomorphata</taxon>
        <taxon>Eupercaria</taxon>
        <taxon>Tetraodontiformes</taxon>
        <taxon>Tetradontoidea</taxon>
        <taxon>Tetraodontidae</taxon>
        <taxon>Tetraodon</taxon>
    </lineage>
</organism>
<gene>
    <name type="primary">MT-ND5</name>
    <name type="synonym">MTND5</name>
    <name type="synonym">NADH5</name>
    <name type="synonym">ND5</name>
</gene>